<dbReference type="EMBL" id="CP001127">
    <property type="protein sequence ID" value="ACF89814.1"/>
    <property type="molecule type" value="Genomic_DNA"/>
</dbReference>
<dbReference type="RefSeq" id="WP_000131734.1">
    <property type="nucleotide sequence ID" value="NC_011094.1"/>
</dbReference>
<dbReference type="SMR" id="B4TQE4"/>
<dbReference type="KEGG" id="sew:SeSA_A2642"/>
<dbReference type="HOGENOM" id="CLU_020088_2_0_6"/>
<dbReference type="Proteomes" id="UP000001865">
    <property type="component" value="Chromosome"/>
</dbReference>
<dbReference type="GO" id="GO:0005886">
    <property type="term" value="C:plasma membrane"/>
    <property type="evidence" value="ECO:0007669"/>
    <property type="project" value="UniProtKB-SubCell"/>
</dbReference>
<dbReference type="GO" id="GO:0015086">
    <property type="term" value="F:cadmium ion transmembrane transporter activity"/>
    <property type="evidence" value="ECO:0007669"/>
    <property type="project" value="TreeGrafter"/>
</dbReference>
<dbReference type="GO" id="GO:0005384">
    <property type="term" value="F:manganese ion transmembrane transporter activity"/>
    <property type="evidence" value="ECO:0007669"/>
    <property type="project" value="TreeGrafter"/>
</dbReference>
<dbReference type="GO" id="GO:0046872">
    <property type="term" value="F:metal ion binding"/>
    <property type="evidence" value="ECO:0007669"/>
    <property type="project" value="UniProtKB-UniRule"/>
</dbReference>
<dbReference type="GO" id="GO:0015293">
    <property type="term" value="F:symporter activity"/>
    <property type="evidence" value="ECO:0007669"/>
    <property type="project" value="UniProtKB-UniRule"/>
</dbReference>
<dbReference type="GO" id="GO:0034755">
    <property type="term" value="P:iron ion transmembrane transport"/>
    <property type="evidence" value="ECO:0007669"/>
    <property type="project" value="TreeGrafter"/>
</dbReference>
<dbReference type="HAMAP" id="MF_00221">
    <property type="entry name" value="NRAMP"/>
    <property type="match status" value="1"/>
</dbReference>
<dbReference type="InterPro" id="IPR001046">
    <property type="entry name" value="NRAMP_fam"/>
</dbReference>
<dbReference type="NCBIfam" id="TIGR01197">
    <property type="entry name" value="nramp"/>
    <property type="match status" value="1"/>
</dbReference>
<dbReference type="NCBIfam" id="NF037982">
    <property type="entry name" value="Nramp_1"/>
    <property type="match status" value="1"/>
</dbReference>
<dbReference type="NCBIfam" id="NF001923">
    <property type="entry name" value="PRK00701.1"/>
    <property type="match status" value="1"/>
</dbReference>
<dbReference type="PANTHER" id="PTHR11706:SF33">
    <property type="entry name" value="NATURAL RESISTANCE-ASSOCIATED MACROPHAGE PROTEIN 2"/>
    <property type="match status" value="1"/>
</dbReference>
<dbReference type="PANTHER" id="PTHR11706">
    <property type="entry name" value="SOLUTE CARRIER PROTEIN FAMILY 11 MEMBER"/>
    <property type="match status" value="1"/>
</dbReference>
<dbReference type="Pfam" id="PF01566">
    <property type="entry name" value="Nramp"/>
    <property type="match status" value="1"/>
</dbReference>
<dbReference type="PRINTS" id="PR00447">
    <property type="entry name" value="NATRESASSCMP"/>
</dbReference>
<name>MNTH_SALSV</name>
<feature type="chain" id="PRO_1000100091" description="Divalent metal cation transporter MntH">
    <location>
        <begin position="1"/>
        <end position="413"/>
    </location>
</feature>
<feature type="topological domain" description="Cytoplasmic" evidence="1">
    <location>
        <begin position="1"/>
        <end position="19"/>
    </location>
</feature>
<feature type="transmembrane region" description="Helical" evidence="1">
    <location>
        <begin position="20"/>
        <end position="39"/>
    </location>
</feature>
<feature type="topological domain" description="Periplasmic" evidence="1">
    <location>
        <begin position="40"/>
        <end position="51"/>
    </location>
</feature>
<feature type="transmembrane region" description="Helical" evidence="1">
    <location>
        <begin position="52"/>
        <end position="71"/>
    </location>
</feature>
<feature type="topological domain" description="Cytoplasmic" evidence="1">
    <location>
        <begin position="72"/>
        <end position="95"/>
    </location>
</feature>
<feature type="transmembrane region" description="Helical" evidence="1">
    <location>
        <begin position="96"/>
        <end position="118"/>
    </location>
</feature>
<feature type="topological domain" description="Periplasmic" evidence="1">
    <location>
        <begin position="119"/>
        <end position="125"/>
    </location>
</feature>
<feature type="transmembrane region" description="Helical" evidence="1">
    <location>
        <begin position="126"/>
        <end position="145"/>
    </location>
</feature>
<feature type="topological domain" description="Cytoplasmic" evidence="1">
    <location>
        <begin position="146"/>
        <end position="155"/>
    </location>
</feature>
<feature type="transmembrane region" description="Helical" evidence="1">
    <location>
        <begin position="156"/>
        <end position="175"/>
    </location>
</feature>
<feature type="topological domain" description="Periplasmic" evidence="1">
    <location>
        <begin position="176"/>
        <end position="196"/>
    </location>
</feature>
<feature type="transmembrane region" description="Helical" evidence="1">
    <location>
        <begin position="197"/>
        <end position="220"/>
    </location>
</feature>
<feature type="topological domain" description="Cytoplasmic" evidence="1">
    <location>
        <begin position="221"/>
        <end position="238"/>
    </location>
</feature>
<feature type="transmembrane region" description="Helical" evidence="1">
    <location>
        <begin position="239"/>
        <end position="258"/>
    </location>
</feature>
<feature type="topological domain" description="Periplasmic" evidence="1">
    <location>
        <begin position="259"/>
        <end position="276"/>
    </location>
</feature>
<feature type="transmembrane region" description="Helical" evidence="1">
    <location>
        <begin position="277"/>
        <end position="297"/>
    </location>
</feature>
<feature type="topological domain" description="Cytoplasmic" evidence="1">
    <location>
        <begin position="298"/>
        <end position="327"/>
    </location>
</feature>
<feature type="transmembrane region" description="Helical" evidence="1">
    <location>
        <begin position="328"/>
        <end position="344"/>
    </location>
</feature>
<feature type="topological domain" description="Periplasmic" evidence="1">
    <location>
        <begin position="345"/>
        <end position="350"/>
    </location>
</feature>
<feature type="transmembrane region" description="Helical" evidence="1">
    <location>
        <begin position="351"/>
        <end position="370"/>
    </location>
</feature>
<feature type="topological domain" description="Cytoplasmic" evidence="1">
    <location>
        <begin position="371"/>
        <end position="387"/>
    </location>
</feature>
<feature type="transmembrane region" description="Helical" evidence="1">
    <location>
        <begin position="388"/>
        <end position="406"/>
    </location>
</feature>
<feature type="topological domain" description="Periplasmic" evidence="1">
    <location>
        <begin position="407"/>
        <end position="413"/>
    </location>
</feature>
<protein>
    <recommendedName>
        <fullName evidence="1">Divalent metal cation transporter MntH</fullName>
    </recommendedName>
</protein>
<sequence>MTDNRVENSSGRAARKLRLALMGPAFIAAIGYIDPGNFATNIQAGASFGYQLLWVVVWANLMAMLIQILSAKLGIATGKNLAEQIRDHYPRPVVWFYWVQAEIIAMATDLAEFIGAAIGFKLILGVSLLQGAVLTGIATFLILMLQRRGQKPLEKVIGGLLLFVAAAYIVELFFSQPDMAQLGKGMVIPALPNPEAVFLAAGVLGATIMPHVIYLHSSLTQHLHGGTRQQRYSATKWDVAIAMTIAGFVNLAMMATAAAAFHFSGHTGIADLDQAYLTLEPLLSHAAATVFGLSLVAAGLSSTVVGTLAGQVVMQGFVRFHIPLWVRRTITMLPSFIVILMGLDPTRILVMSQVLLSFGIALALVPLLIFTSNATLMGELVNTRRVKQIGWIIVVLVVALNIWLLVGTVMGLS</sequence>
<accession>B4TQE4</accession>
<comment type="function">
    <text evidence="1">H(+)-stimulated, divalent metal cation uptake system.</text>
</comment>
<comment type="subcellular location">
    <subcellularLocation>
        <location evidence="1">Cell inner membrane</location>
        <topology evidence="1">Multi-pass membrane protein</topology>
    </subcellularLocation>
</comment>
<comment type="similarity">
    <text evidence="1">Belongs to the NRAMP family.</text>
</comment>
<gene>
    <name evidence="1" type="primary">mntH</name>
    <name type="ordered locus">SeSA_A2642</name>
</gene>
<evidence type="ECO:0000255" key="1">
    <source>
        <dbReference type="HAMAP-Rule" id="MF_00221"/>
    </source>
</evidence>
<keyword id="KW-0997">Cell inner membrane</keyword>
<keyword id="KW-1003">Cell membrane</keyword>
<keyword id="KW-0406">Ion transport</keyword>
<keyword id="KW-0472">Membrane</keyword>
<keyword id="KW-0769">Symport</keyword>
<keyword id="KW-0812">Transmembrane</keyword>
<keyword id="KW-1133">Transmembrane helix</keyword>
<keyword id="KW-0813">Transport</keyword>
<reference key="1">
    <citation type="journal article" date="2011" name="J. Bacteriol.">
        <title>Comparative genomics of 28 Salmonella enterica isolates: evidence for CRISPR-mediated adaptive sublineage evolution.</title>
        <authorList>
            <person name="Fricke W.F."/>
            <person name="Mammel M.K."/>
            <person name="McDermott P.F."/>
            <person name="Tartera C."/>
            <person name="White D.G."/>
            <person name="Leclerc J.E."/>
            <person name="Ravel J."/>
            <person name="Cebula T.A."/>
        </authorList>
    </citation>
    <scope>NUCLEOTIDE SEQUENCE [LARGE SCALE GENOMIC DNA]</scope>
    <source>
        <strain>CVM19633</strain>
    </source>
</reference>
<organism>
    <name type="scientific">Salmonella schwarzengrund (strain CVM19633)</name>
    <dbReference type="NCBI Taxonomy" id="439843"/>
    <lineage>
        <taxon>Bacteria</taxon>
        <taxon>Pseudomonadati</taxon>
        <taxon>Pseudomonadota</taxon>
        <taxon>Gammaproteobacteria</taxon>
        <taxon>Enterobacterales</taxon>
        <taxon>Enterobacteriaceae</taxon>
        <taxon>Salmonella</taxon>
    </lineage>
</organism>
<proteinExistence type="inferred from homology"/>